<gene>
    <name evidence="1" type="primary">lpxC</name>
    <name type="ordered locus">Dtpsy_2973</name>
</gene>
<dbReference type="EC" id="3.5.1.108" evidence="1"/>
<dbReference type="EMBL" id="CP001392">
    <property type="protein sequence ID" value="ACM34406.1"/>
    <property type="molecule type" value="Genomic_DNA"/>
</dbReference>
<dbReference type="RefSeq" id="WP_015914257.1">
    <property type="nucleotide sequence ID" value="NC_011992.1"/>
</dbReference>
<dbReference type="SMR" id="B9MFQ5"/>
<dbReference type="KEGG" id="dia:Dtpsy_2973"/>
<dbReference type="eggNOG" id="COG0774">
    <property type="taxonomic scope" value="Bacteria"/>
</dbReference>
<dbReference type="HOGENOM" id="CLU_046528_1_0_4"/>
<dbReference type="UniPathway" id="UPA00359">
    <property type="reaction ID" value="UER00478"/>
</dbReference>
<dbReference type="Proteomes" id="UP000000450">
    <property type="component" value="Chromosome"/>
</dbReference>
<dbReference type="GO" id="GO:0016020">
    <property type="term" value="C:membrane"/>
    <property type="evidence" value="ECO:0007669"/>
    <property type="project" value="GOC"/>
</dbReference>
<dbReference type="GO" id="GO:0046872">
    <property type="term" value="F:metal ion binding"/>
    <property type="evidence" value="ECO:0007669"/>
    <property type="project" value="UniProtKB-KW"/>
</dbReference>
<dbReference type="GO" id="GO:0103117">
    <property type="term" value="F:UDP-3-O-acyl-N-acetylglucosamine deacetylase activity"/>
    <property type="evidence" value="ECO:0007669"/>
    <property type="project" value="UniProtKB-UniRule"/>
</dbReference>
<dbReference type="GO" id="GO:0009245">
    <property type="term" value="P:lipid A biosynthetic process"/>
    <property type="evidence" value="ECO:0007669"/>
    <property type="project" value="UniProtKB-UniRule"/>
</dbReference>
<dbReference type="Gene3D" id="3.30.230.20">
    <property type="entry name" value="lpxc deacetylase, domain 1"/>
    <property type="match status" value="1"/>
</dbReference>
<dbReference type="Gene3D" id="3.30.1700.10">
    <property type="entry name" value="lpxc deacetylase, domain 2"/>
    <property type="match status" value="1"/>
</dbReference>
<dbReference type="HAMAP" id="MF_00388">
    <property type="entry name" value="LpxC"/>
    <property type="match status" value="1"/>
</dbReference>
<dbReference type="InterPro" id="IPR020568">
    <property type="entry name" value="Ribosomal_Su5_D2-typ_SF"/>
</dbReference>
<dbReference type="InterPro" id="IPR004463">
    <property type="entry name" value="UDP-acyl_GlcNac_deAcase"/>
</dbReference>
<dbReference type="InterPro" id="IPR011334">
    <property type="entry name" value="UDP-acyl_GlcNac_deAcase_C"/>
</dbReference>
<dbReference type="InterPro" id="IPR015870">
    <property type="entry name" value="UDP-acyl_N-AcGlcN_deAcase_N"/>
</dbReference>
<dbReference type="NCBIfam" id="TIGR00325">
    <property type="entry name" value="lpxC"/>
    <property type="match status" value="1"/>
</dbReference>
<dbReference type="PANTHER" id="PTHR33694">
    <property type="entry name" value="UDP-3-O-ACYL-N-ACETYLGLUCOSAMINE DEACETYLASE 1, MITOCHONDRIAL-RELATED"/>
    <property type="match status" value="1"/>
</dbReference>
<dbReference type="PANTHER" id="PTHR33694:SF1">
    <property type="entry name" value="UDP-3-O-ACYL-N-ACETYLGLUCOSAMINE DEACETYLASE 1, MITOCHONDRIAL-RELATED"/>
    <property type="match status" value="1"/>
</dbReference>
<dbReference type="Pfam" id="PF03331">
    <property type="entry name" value="LpxC"/>
    <property type="match status" value="1"/>
</dbReference>
<dbReference type="SUPFAM" id="SSF54211">
    <property type="entry name" value="Ribosomal protein S5 domain 2-like"/>
    <property type="match status" value="2"/>
</dbReference>
<evidence type="ECO:0000255" key="1">
    <source>
        <dbReference type="HAMAP-Rule" id="MF_00388"/>
    </source>
</evidence>
<name>LPXC_ACIET</name>
<comment type="function">
    <text evidence="1">Catalyzes the hydrolysis of UDP-3-O-myristoyl-N-acetylglucosamine to form UDP-3-O-myristoylglucosamine and acetate, the committed step in lipid A biosynthesis.</text>
</comment>
<comment type="catalytic activity">
    <reaction evidence="1">
        <text>a UDP-3-O-[(3R)-3-hydroxyacyl]-N-acetyl-alpha-D-glucosamine + H2O = a UDP-3-O-[(3R)-3-hydroxyacyl]-alpha-D-glucosamine + acetate</text>
        <dbReference type="Rhea" id="RHEA:67816"/>
        <dbReference type="ChEBI" id="CHEBI:15377"/>
        <dbReference type="ChEBI" id="CHEBI:30089"/>
        <dbReference type="ChEBI" id="CHEBI:137740"/>
        <dbReference type="ChEBI" id="CHEBI:173225"/>
        <dbReference type="EC" id="3.5.1.108"/>
    </reaction>
</comment>
<comment type="cofactor">
    <cofactor evidence="1">
        <name>Zn(2+)</name>
        <dbReference type="ChEBI" id="CHEBI:29105"/>
    </cofactor>
</comment>
<comment type="pathway">
    <text evidence="1">Glycolipid biosynthesis; lipid IV(A) biosynthesis; lipid IV(A) from (3R)-3-hydroxytetradecanoyl-[acyl-carrier-protein] and UDP-N-acetyl-alpha-D-glucosamine: step 2/6.</text>
</comment>
<comment type="similarity">
    <text evidence="1">Belongs to the LpxC family.</text>
</comment>
<protein>
    <recommendedName>
        <fullName evidence="1">UDP-3-O-acyl-N-acetylglucosamine deacetylase</fullName>
        <shortName evidence="1">UDP-3-O-acyl-GlcNAc deacetylase</shortName>
        <ecNumber evidence="1">3.5.1.108</ecNumber>
    </recommendedName>
    <alternativeName>
        <fullName evidence="1">UDP-3-O-[R-3-hydroxymyristoyl]-N-acetylglucosamine deacetylase</fullName>
    </alternativeName>
</protein>
<reference key="1">
    <citation type="submission" date="2009-01" db="EMBL/GenBank/DDBJ databases">
        <title>Complete sequence of Diaphorobacter sp. TPSY.</title>
        <authorList>
            <consortium name="US DOE Joint Genome Institute"/>
            <person name="Lucas S."/>
            <person name="Copeland A."/>
            <person name="Lapidus A."/>
            <person name="Glavina del Rio T."/>
            <person name="Tice H."/>
            <person name="Bruce D."/>
            <person name="Goodwin L."/>
            <person name="Pitluck S."/>
            <person name="Chertkov O."/>
            <person name="Brettin T."/>
            <person name="Detter J.C."/>
            <person name="Han C."/>
            <person name="Larimer F."/>
            <person name="Land M."/>
            <person name="Hauser L."/>
            <person name="Kyrpides N."/>
            <person name="Mikhailova N."/>
            <person name="Coates J.D."/>
        </authorList>
    </citation>
    <scope>NUCLEOTIDE SEQUENCE [LARGE SCALE GENOMIC DNA]</scope>
    <source>
        <strain>TPSY</strain>
    </source>
</reference>
<sequence>MLQQRTIKTLTRAVGVGLHSGQRVELTLRPAQPDTGIVFRRVDLPEPVDIPITATAVVDTRMASTIGAGGAKVHTVEHLMSACAGLGLDNLYIDITAEEVPILDGSSASFVFLLQSAGVELQNAPKRFIRVKRPVEVREGTGQQLKWARLEPYHGFKLRFDIDFAHPAVDSTGQSAEFDLGEGNYARDIARARTFGFTKDVEMLRSSGLALGGGLDNAIVMDDYKVLNADGLRYDAEFARHKILDAMGDLYLVGKPLLAAYSAFRSGHAMNNLLLRELLAHEDAWEIVTFENERQAPAGFTQPVRAW</sequence>
<accession>B9MFQ5</accession>
<keyword id="KW-0378">Hydrolase</keyword>
<keyword id="KW-0441">Lipid A biosynthesis</keyword>
<keyword id="KW-0444">Lipid biosynthesis</keyword>
<keyword id="KW-0443">Lipid metabolism</keyword>
<keyword id="KW-0479">Metal-binding</keyword>
<keyword id="KW-1185">Reference proteome</keyword>
<keyword id="KW-0862">Zinc</keyword>
<proteinExistence type="inferred from homology"/>
<organism>
    <name type="scientific">Acidovorax ebreus (strain TPSY)</name>
    <name type="common">Diaphorobacter sp. (strain TPSY)</name>
    <dbReference type="NCBI Taxonomy" id="535289"/>
    <lineage>
        <taxon>Bacteria</taxon>
        <taxon>Pseudomonadati</taxon>
        <taxon>Pseudomonadota</taxon>
        <taxon>Betaproteobacteria</taxon>
        <taxon>Burkholderiales</taxon>
        <taxon>Comamonadaceae</taxon>
        <taxon>Diaphorobacter</taxon>
    </lineage>
</organism>
<feature type="chain" id="PRO_1000134394" description="UDP-3-O-acyl-N-acetylglucosamine deacetylase">
    <location>
        <begin position="1"/>
        <end position="307"/>
    </location>
</feature>
<feature type="active site" description="Proton donor" evidence="1">
    <location>
        <position position="268"/>
    </location>
</feature>
<feature type="binding site" evidence="1">
    <location>
        <position position="78"/>
    </location>
    <ligand>
        <name>Zn(2+)</name>
        <dbReference type="ChEBI" id="CHEBI:29105"/>
    </ligand>
</feature>
<feature type="binding site" evidence="1">
    <location>
        <position position="241"/>
    </location>
    <ligand>
        <name>Zn(2+)</name>
        <dbReference type="ChEBI" id="CHEBI:29105"/>
    </ligand>
</feature>
<feature type="binding site" evidence="1">
    <location>
        <position position="245"/>
    </location>
    <ligand>
        <name>Zn(2+)</name>
        <dbReference type="ChEBI" id="CHEBI:29105"/>
    </ligand>
</feature>